<proteinExistence type="inferred from homology"/>
<dbReference type="EMBL" id="AE008923">
    <property type="protein sequence ID" value="AAM38314.1"/>
    <property type="molecule type" value="Genomic_DNA"/>
</dbReference>
<dbReference type="RefSeq" id="WP_003483384.1">
    <property type="nucleotide sequence ID" value="NC_003919.1"/>
</dbReference>
<dbReference type="SMR" id="Q8PGZ1"/>
<dbReference type="KEGG" id="xac:XAC3471"/>
<dbReference type="eggNOG" id="COG1301">
    <property type="taxonomic scope" value="Bacteria"/>
</dbReference>
<dbReference type="HOGENOM" id="CLU_019375_7_0_6"/>
<dbReference type="Proteomes" id="UP000000576">
    <property type="component" value="Chromosome"/>
</dbReference>
<dbReference type="GO" id="GO:0005886">
    <property type="term" value="C:plasma membrane"/>
    <property type="evidence" value="ECO:0007669"/>
    <property type="project" value="UniProtKB-SubCell"/>
</dbReference>
<dbReference type="GO" id="GO:0015138">
    <property type="term" value="F:fumarate transmembrane transporter activity"/>
    <property type="evidence" value="ECO:0007669"/>
    <property type="project" value="TreeGrafter"/>
</dbReference>
<dbReference type="GO" id="GO:0015366">
    <property type="term" value="F:malate:proton symporter activity"/>
    <property type="evidence" value="ECO:0007669"/>
    <property type="project" value="TreeGrafter"/>
</dbReference>
<dbReference type="GO" id="GO:0015141">
    <property type="term" value="F:succinate transmembrane transporter activity"/>
    <property type="evidence" value="ECO:0007669"/>
    <property type="project" value="TreeGrafter"/>
</dbReference>
<dbReference type="GO" id="GO:0070778">
    <property type="term" value="P:L-aspartate transmembrane transport"/>
    <property type="evidence" value="ECO:0007669"/>
    <property type="project" value="TreeGrafter"/>
</dbReference>
<dbReference type="FunFam" id="1.10.3860.10:FF:000001">
    <property type="entry name" value="C4-dicarboxylate transport protein"/>
    <property type="match status" value="1"/>
</dbReference>
<dbReference type="Gene3D" id="1.10.3860.10">
    <property type="entry name" value="Sodium:dicarboxylate symporter"/>
    <property type="match status" value="1"/>
</dbReference>
<dbReference type="HAMAP" id="MF_01300">
    <property type="entry name" value="C4_dicarb_transport"/>
    <property type="match status" value="1"/>
</dbReference>
<dbReference type="InterPro" id="IPR023954">
    <property type="entry name" value="C4_dicarb_transport"/>
</dbReference>
<dbReference type="InterPro" id="IPR001991">
    <property type="entry name" value="Na-dicarboxylate_symporter"/>
</dbReference>
<dbReference type="InterPro" id="IPR018107">
    <property type="entry name" value="Na-dicarboxylate_symporter_CS"/>
</dbReference>
<dbReference type="InterPro" id="IPR036458">
    <property type="entry name" value="Na:dicarbo_symporter_sf"/>
</dbReference>
<dbReference type="NCBIfam" id="NF002461">
    <property type="entry name" value="PRK01663.1"/>
    <property type="match status" value="1"/>
</dbReference>
<dbReference type="NCBIfam" id="NF009587">
    <property type="entry name" value="PRK13027.1"/>
    <property type="match status" value="1"/>
</dbReference>
<dbReference type="PANTHER" id="PTHR42865:SF1">
    <property type="entry name" value="AEROBIC C4-DICARBOXYLATE TRANSPORT PROTEIN"/>
    <property type="match status" value="1"/>
</dbReference>
<dbReference type="PANTHER" id="PTHR42865">
    <property type="entry name" value="PROTON/GLUTAMATE-ASPARTATE SYMPORTER"/>
    <property type="match status" value="1"/>
</dbReference>
<dbReference type="Pfam" id="PF00375">
    <property type="entry name" value="SDF"/>
    <property type="match status" value="1"/>
</dbReference>
<dbReference type="PRINTS" id="PR00173">
    <property type="entry name" value="EDTRNSPORT"/>
</dbReference>
<dbReference type="SUPFAM" id="SSF118215">
    <property type="entry name" value="Proton glutamate symport protein"/>
    <property type="match status" value="1"/>
</dbReference>
<dbReference type="PROSITE" id="PS00713">
    <property type="entry name" value="NA_DICARBOXYL_SYMP_1"/>
    <property type="match status" value="1"/>
</dbReference>
<dbReference type="PROSITE" id="PS00714">
    <property type="entry name" value="NA_DICARBOXYL_SYMP_2"/>
    <property type="match status" value="1"/>
</dbReference>
<name>DCTA_XANAC</name>
<feature type="chain" id="PRO_0000202113" description="C4-dicarboxylate transport protein">
    <location>
        <begin position="1"/>
        <end position="457"/>
    </location>
</feature>
<feature type="transmembrane region" description="Helical" evidence="1">
    <location>
        <begin position="20"/>
        <end position="42"/>
    </location>
</feature>
<feature type="transmembrane region" description="Helical" evidence="1">
    <location>
        <begin position="51"/>
        <end position="73"/>
    </location>
</feature>
<feature type="transmembrane region" description="Helical" evidence="1">
    <location>
        <begin position="88"/>
        <end position="110"/>
    </location>
</feature>
<feature type="transmembrane region" description="Helical" evidence="1">
    <location>
        <begin position="138"/>
        <end position="158"/>
    </location>
</feature>
<feature type="transmembrane region" description="Helical" evidence="1">
    <location>
        <begin position="166"/>
        <end position="188"/>
    </location>
</feature>
<feature type="transmembrane region" description="Helical" evidence="1">
    <location>
        <begin position="212"/>
        <end position="234"/>
    </location>
</feature>
<feature type="transmembrane region" description="Helical" evidence="1">
    <location>
        <begin position="241"/>
        <end position="263"/>
    </location>
</feature>
<protein>
    <recommendedName>
        <fullName evidence="1">C4-dicarboxylate transport protein</fullName>
    </recommendedName>
</protein>
<accession>Q8PGZ1</accession>
<reference key="1">
    <citation type="journal article" date="2002" name="Nature">
        <title>Comparison of the genomes of two Xanthomonas pathogens with differing host specificities.</title>
        <authorList>
            <person name="da Silva A.C.R."/>
            <person name="Ferro J.A."/>
            <person name="Reinach F.C."/>
            <person name="Farah C.S."/>
            <person name="Furlan L.R."/>
            <person name="Quaggio R.B."/>
            <person name="Monteiro-Vitorello C.B."/>
            <person name="Van Sluys M.A."/>
            <person name="Almeida N.F. Jr."/>
            <person name="Alves L.M.C."/>
            <person name="do Amaral A.M."/>
            <person name="Bertolini M.C."/>
            <person name="Camargo L.E.A."/>
            <person name="Camarotte G."/>
            <person name="Cannavan F."/>
            <person name="Cardozo J."/>
            <person name="Chambergo F."/>
            <person name="Ciapina L.P."/>
            <person name="Cicarelli R.M.B."/>
            <person name="Coutinho L.L."/>
            <person name="Cursino-Santos J.R."/>
            <person name="El-Dorry H."/>
            <person name="Faria J.B."/>
            <person name="Ferreira A.J.S."/>
            <person name="Ferreira R.C.C."/>
            <person name="Ferro M.I.T."/>
            <person name="Formighieri E.F."/>
            <person name="Franco M.C."/>
            <person name="Greggio C.C."/>
            <person name="Gruber A."/>
            <person name="Katsuyama A.M."/>
            <person name="Kishi L.T."/>
            <person name="Leite R.P."/>
            <person name="Lemos E.G.M."/>
            <person name="Lemos M.V.F."/>
            <person name="Locali E.C."/>
            <person name="Machado M.A."/>
            <person name="Madeira A.M.B.N."/>
            <person name="Martinez-Rossi N.M."/>
            <person name="Martins E.C."/>
            <person name="Meidanis J."/>
            <person name="Menck C.F.M."/>
            <person name="Miyaki C.Y."/>
            <person name="Moon D.H."/>
            <person name="Moreira L.M."/>
            <person name="Novo M.T.M."/>
            <person name="Okura V.K."/>
            <person name="Oliveira M.C."/>
            <person name="Oliveira V.R."/>
            <person name="Pereira H.A."/>
            <person name="Rossi A."/>
            <person name="Sena J.A.D."/>
            <person name="Silva C."/>
            <person name="de Souza R.F."/>
            <person name="Spinola L.A.F."/>
            <person name="Takita M.A."/>
            <person name="Tamura R.E."/>
            <person name="Teixeira E.C."/>
            <person name="Tezza R.I.D."/>
            <person name="Trindade dos Santos M."/>
            <person name="Truffi D."/>
            <person name="Tsai S.M."/>
            <person name="White F.F."/>
            <person name="Setubal J.C."/>
            <person name="Kitajima J.P."/>
        </authorList>
    </citation>
    <scope>NUCLEOTIDE SEQUENCE [LARGE SCALE GENOMIC DNA]</scope>
    <source>
        <strain>306</strain>
    </source>
</reference>
<keyword id="KW-0997">Cell inner membrane</keyword>
<keyword id="KW-1003">Cell membrane</keyword>
<keyword id="KW-0472">Membrane</keyword>
<keyword id="KW-0769">Symport</keyword>
<keyword id="KW-0812">Transmembrane</keyword>
<keyword id="KW-1133">Transmembrane helix</keyword>
<keyword id="KW-0813">Transport</keyword>
<gene>
    <name evidence="1" type="primary">dctA</name>
    <name type="ordered locus">XAC3471</name>
</gene>
<evidence type="ECO:0000255" key="1">
    <source>
        <dbReference type="HAMAP-Rule" id="MF_01300"/>
    </source>
</evidence>
<comment type="function">
    <text evidence="1">Responsible for the transport of dicarboxylates such as succinate, fumarate, and malate from the periplasm across the membrane.</text>
</comment>
<comment type="subcellular location">
    <subcellularLocation>
        <location evidence="1">Cell inner membrane</location>
        <topology evidence="1">Multi-pass membrane protein</topology>
    </subcellularLocation>
</comment>
<comment type="similarity">
    <text evidence="1">Belongs to the dicarboxylate/amino acid:cation symporter (DAACS) (TC 2.A.23) family.</text>
</comment>
<organism>
    <name type="scientific">Xanthomonas axonopodis pv. citri (strain 306)</name>
    <dbReference type="NCBI Taxonomy" id="190486"/>
    <lineage>
        <taxon>Bacteria</taxon>
        <taxon>Pseudomonadati</taxon>
        <taxon>Pseudomonadota</taxon>
        <taxon>Gammaproteobacteria</taxon>
        <taxon>Lysobacterales</taxon>
        <taxon>Lysobacteraceae</taxon>
        <taxon>Xanthomonas</taxon>
    </lineage>
</organism>
<sequence>MHISKPAGPLPASVPFYRQLYFQVVVAIVLGALLGHFEPAFAESLKPLGDAFIKLVKMIIAPVIFLTIVTGIAGMTHLKTVGRVFGKAMAYFLFFSTLALVVGLVVAHVVQPGAGMNINPADLDQSAVKSYVEKSHDLTLVGFLMDIIPNSLIGAFTGDQVVNGKLTGPNILQVLFVAVLFGVSLALVGERGKPVLNLLEALIAPVFKLVHILMRAAPIGAFGAIAFTIGKYGVESLVNLAWLVGSFYLTSLLFVLVILGLVSRLCGFSVLKLIRYLKAELLLVLGTSSSESALPSLMEKMEKAGCEKSVVGLVVPTGYSFNLDGTNIYMTLAALFIAQATNTELTLGHQIALLAVAMLSSKGAAGVTGAGFITLAATLAVVPEVPVAGMALILGVDRFMSECRSLTNFIGNAVATVVVSRWENALDRDRLKLVLDGGEPPLLAPVGQPGVAPASLR</sequence>